<dbReference type="EC" id="2.1.3.-" evidence="1"/>
<dbReference type="EMBL" id="AM181176">
    <property type="protein sequence ID" value="CAY47331.1"/>
    <property type="molecule type" value="Genomic_DNA"/>
</dbReference>
<dbReference type="RefSeq" id="WP_012722408.1">
    <property type="nucleotide sequence ID" value="NC_012660.1"/>
</dbReference>
<dbReference type="SMR" id="C3K6Z4"/>
<dbReference type="STRING" id="294.SRM1_04620"/>
<dbReference type="GeneID" id="93462688"/>
<dbReference type="eggNOG" id="COG2226">
    <property type="taxonomic scope" value="Bacteria"/>
</dbReference>
<dbReference type="HOGENOM" id="CLU_078475_0_0_6"/>
<dbReference type="OrthoDB" id="9779941at2"/>
<dbReference type="GO" id="GO:0016743">
    <property type="term" value="F:carboxyl- or carbamoyltransferase activity"/>
    <property type="evidence" value="ECO:0007669"/>
    <property type="project" value="UniProtKB-UniRule"/>
</dbReference>
<dbReference type="GO" id="GO:1904047">
    <property type="term" value="F:S-adenosyl-L-methionine binding"/>
    <property type="evidence" value="ECO:0007669"/>
    <property type="project" value="UniProtKB-UniRule"/>
</dbReference>
<dbReference type="GO" id="GO:0002098">
    <property type="term" value="P:tRNA wobble uridine modification"/>
    <property type="evidence" value="ECO:0007669"/>
    <property type="project" value="InterPro"/>
</dbReference>
<dbReference type="CDD" id="cd02440">
    <property type="entry name" value="AdoMet_MTases"/>
    <property type="match status" value="1"/>
</dbReference>
<dbReference type="Gene3D" id="3.40.50.150">
    <property type="entry name" value="Vaccinia Virus protein VP39"/>
    <property type="match status" value="1"/>
</dbReference>
<dbReference type="HAMAP" id="MF_01589">
    <property type="entry name" value="Cx_SAM_synthase"/>
    <property type="match status" value="1"/>
</dbReference>
<dbReference type="InterPro" id="IPR005271">
    <property type="entry name" value="CmoA"/>
</dbReference>
<dbReference type="InterPro" id="IPR041698">
    <property type="entry name" value="Methyltransf_25"/>
</dbReference>
<dbReference type="InterPro" id="IPR029063">
    <property type="entry name" value="SAM-dependent_MTases_sf"/>
</dbReference>
<dbReference type="NCBIfam" id="TIGR00740">
    <property type="entry name" value="carboxy-S-adenosyl-L-methionine synthase CmoA"/>
    <property type="match status" value="1"/>
</dbReference>
<dbReference type="NCBIfam" id="NF011995">
    <property type="entry name" value="PRK15451.1"/>
    <property type="match status" value="1"/>
</dbReference>
<dbReference type="PANTHER" id="PTHR43861:SF2">
    <property type="entry name" value="CARBOXY-S-ADENOSYL-L-METHIONINE SYNTHASE"/>
    <property type="match status" value="1"/>
</dbReference>
<dbReference type="PANTHER" id="PTHR43861">
    <property type="entry name" value="TRANS-ACONITATE 2-METHYLTRANSFERASE-RELATED"/>
    <property type="match status" value="1"/>
</dbReference>
<dbReference type="Pfam" id="PF13649">
    <property type="entry name" value="Methyltransf_25"/>
    <property type="match status" value="1"/>
</dbReference>
<dbReference type="PIRSF" id="PIRSF006325">
    <property type="entry name" value="MeTrfase_bac"/>
    <property type="match status" value="1"/>
</dbReference>
<dbReference type="SUPFAM" id="SSF53335">
    <property type="entry name" value="S-adenosyl-L-methionine-dependent methyltransferases"/>
    <property type="match status" value="1"/>
</dbReference>
<proteinExistence type="inferred from homology"/>
<name>CMOA_PSEFS</name>
<comment type="function">
    <text evidence="1">Catalyzes the conversion of S-adenosyl-L-methionine (SAM) to carboxy-S-adenosyl-L-methionine (Cx-SAM).</text>
</comment>
<comment type="catalytic activity">
    <reaction evidence="1">
        <text>prephenate + S-adenosyl-L-methionine = carboxy-S-adenosyl-L-methionine + 3-phenylpyruvate + H2O</text>
        <dbReference type="Rhea" id="RHEA:51692"/>
        <dbReference type="ChEBI" id="CHEBI:15377"/>
        <dbReference type="ChEBI" id="CHEBI:18005"/>
        <dbReference type="ChEBI" id="CHEBI:29934"/>
        <dbReference type="ChEBI" id="CHEBI:59789"/>
        <dbReference type="ChEBI" id="CHEBI:134278"/>
    </reaction>
</comment>
<comment type="subunit">
    <text evidence="1">Homodimer.</text>
</comment>
<comment type="similarity">
    <text evidence="1">Belongs to the class I-like SAM-binding methyltransferase superfamily. Cx-SAM synthase family.</text>
</comment>
<evidence type="ECO:0000255" key="1">
    <source>
        <dbReference type="HAMAP-Rule" id="MF_01589"/>
    </source>
</evidence>
<keyword id="KW-0949">S-adenosyl-L-methionine</keyword>
<keyword id="KW-0808">Transferase</keyword>
<organism>
    <name type="scientific">Pseudomonas fluorescens (strain SBW25)</name>
    <dbReference type="NCBI Taxonomy" id="216595"/>
    <lineage>
        <taxon>Bacteria</taxon>
        <taxon>Pseudomonadati</taxon>
        <taxon>Pseudomonadota</taxon>
        <taxon>Gammaproteobacteria</taxon>
        <taxon>Pseudomonadales</taxon>
        <taxon>Pseudomonadaceae</taxon>
        <taxon>Pseudomonas</taxon>
    </lineage>
</organism>
<protein>
    <recommendedName>
        <fullName evidence="1">Carboxy-S-adenosyl-L-methionine synthase</fullName>
        <shortName evidence="1">Cx-SAM synthase</shortName>
        <ecNumber evidence="1">2.1.3.-</ecNumber>
    </recommendedName>
</protein>
<accession>C3K6Z4</accession>
<sequence length="247" mass="27482">MSKEPDRLFAQPLPQVPDFAFNEDVVRVFPDMIKRSVPGYPTIVENLGVLAAQFAQPHSVLYDLGSSLGAVTQALRRHVRTDGCRVIAVDNSAAMVERCREYLNGQDSMFQELLPVEVIEGDILALQFAPASVVALNFTLQFIAPDERLALLSRIRQSLLPGGALILSEKLRFNDPEEHALLTDLHIAFKRANGYSELEIAQKRSAIENVMKPDSLEEHRERLLAAGFSTVVPWFQCLNFASLIALP</sequence>
<feature type="chain" id="PRO_1000215639" description="Carboxy-S-adenosyl-L-methionine synthase">
    <location>
        <begin position="1"/>
        <end position="247"/>
    </location>
</feature>
<feature type="binding site" evidence="1">
    <location>
        <position position="40"/>
    </location>
    <ligand>
        <name>S-adenosyl-L-methionine</name>
        <dbReference type="ChEBI" id="CHEBI:59789"/>
    </ligand>
</feature>
<feature type="binding site" evidence="1">
    <location>
        <begin position="65"/>
        <end position="67"/>
    </location>
    <ligand>
        <name>S-adenosyl-L-methionine</name>
        <dbReference type="ChEBI" id="CHEBI:59789"/>
    </ligand>
</feature>
<feature type="binding site" evidence="1">
    <location>
        <begin position="90"/>
        <end position="91"/>
    </location>
    <ligand>
        <name>S-adenosyl-L-methionine</name>
        <dbReference type="ChEBI" id="CHEBI:59789"/>
    </ligand>
</feature>
<feature type="binding site" evidence="1">
    <location>
        <begin position="122"/>
        <end position="123"/>
    </location>
    <ligand>
        <name>S-adenosyl-L-methionine</name>
        <dbReference type="ChEBI" id="CHEBI:59789"/>
    </ligand>
</feature>
<feature type="binding site" evidence="1">
    <location>
        <position position="137"/>
    </location>
    <ligand>
        <name>S-adenosyl-L-methionine</name>
        <dbReference type="ChEBI" id="CHEBI:59789"/>
    </ligand>
</feature>
<feature type="binding site" evidence="1">
    <location>
        <position position="204"/>
    </location>
    <ligand>
        <name>S-adenosyl-L-methionine</name>
        <dbReference type="ChEBI" id="CHEBI:59789"/>
    </ligand>
</feature>
<reference key="1">
    <citation type="journal article" date="2009" name="Genome Biol.">
        <title>Genomic and genetic analyses of diversity and plant interactions of Pseudomonas fluorescens.</title>
        <authorList>
            <person name="Silby M.W."/>
            <person name="Cerdeno-Tarraga A.M."/>
            <person name="Vernikos G.S."/>
            <person name="Giddens S.R."/>
            <person name="Jackson R.W."/>
            <person name="Preston G.M."/>
            <person name="Zhang X.-X."/>
            <person name="Moon C.D."/>
            <person name="Gehrig S.M."/>
            <person name="Godfrey S.A.C."/>
            <person name="Knight C.G."/>
            <person name="Malone J.G."/>
            <person name="Robinson Z."/>
            <person name="Spiers A.J."/>
            <person name="Harris S."/>
            <person name="Challis G.L."/>
            <person name="Yaxley A.M."/>
            <person name="Harris D."/>
            <person name="Seeger K."/>
            <person name="Murphy L."/>
            <person name="Rutter S."/>
            <person name="Squares R."/>
            <person name="Quail M.A."/>
            <person name="Saunders E."/>
            <person name="Mavromatis K."/>
            <person name="Brettin T.S."/>
            <person name="Bentley S.D."/>
            <person name="Hothersall J."/>
            <person name="Stephens E."/>
            <person name="Thomas C.M."/>
            <person name="Parkhill J."/>
            <person name="Levy S.B."/>
            <person name="Rainey P.B."/>
            <person name="Thomson N.R."/>
        </authorList>
    </citation>
    <scope>NUCLEOTIDE SEQUENCE [LARGE SCALE GENOMIC DNA]</scope>
    <source>
        <strain>SBW25</strain>
    </source>
</reference>
<gene>
    <name evidence="1" type="primary">cmoA</name>
    <name type="ordered locus">PFLU_1067</name>
</gene>